<dbReference type="EMBL" id="AP006627">
    <property type="protein sequence ID" value="BAD63413.1"/>
    <property type="molecule type" value="Genomic_DNA"/>
</dbReference>
<dbReference type="RefSeq" id="WP_011245729.1">
    <property type="nucleotide sequence ID" value="NC_006582.1"/>
</dbReference>
<dbReference type="SMR" id="Q5WJP2"/>
<dbReference type="STRING" id="66692.ABC0874"/>
<dbReference type="KEGG" id="bcl:ABC0874"/>
<dbReference type="eggNOG" id="COG1826">
    <property type="taxonomic scope" value="Bacteria"/>
</dbReference>
<dbReference type="HOGENOM" id="CLU_086034_6_0_9"/>
<dbReference type="OrthoDB" id="9800908at2"/>
<dbReference type="Proteomes" id="UP000001168">
    <property type="component" value="Chromosome"/>
</dbReference>
<dbReference type="GO" id="GO:0033281">
    <property type="term" value="C:TAT protein transport complex"/>
    <property type="evidence" value="ECO:0007669"/>
    <property type="project" value="UniProtKB-UniRule"/>
</dbReference>
<dbReference type="GO" id="GO:0008320">
    <property type="term" value="F:protein transmembrane transporter activity"/>
    <property type="evidence" value="ECO:0007669"/>
    <property type="project" value="UniProtKB-UniRule"/>
</dbReference>
<dbReference type="GO" id="GO:0043953">
    <property type="term" value="P:protein transport by the Tat complex"/>
    <property type="evidence" value="ECO:0007669"/>
    <property type="project" value="UniProtKB-UniRule"/>
</dbReference>
<dbReference type="Gene3D" id="1.20.5.3310">
    <property type="match status" value="1"/>
</dbReference>
<dbReference type="HAMAP" id="MF_00236">
    <property type="entry name" value="TatA_E"/>
    <property type="match status" value="1"/>
</dbReference>
<dbReference type="InterPro" id="IPR003369">
    <property type="entry name" value="TatA/B/E"/>
</dbReference>
<dbReference type="InterPro" id="IPR006312">
    <property type="entry name" value="TatA/E"/>
</dbReference>
<dbReference type="NCBIfam" id="NF011430">
    <property type="entry name" value="PRK14861.1"/>
    <property type="match status" value="1"/>
</dbReference>
<dbReference type="NCBIfam" id="TIGR01411">
    <property type="entry name" value="tatAE"/>
    <property type="match status" value="1"/>
</dbReference>
<dbReference type="PANTHER" id="PTHR42982">
    <property type="entry name" value="SEC-INDEPENDENT PROTEIN TRANSLOCASE PROTEIN TATA"/>
    <property type="match status" value="1"/>
</dbReference>
<dbReference type="PANTHER" id="PTHR42982:SF1">
    <property type="entry name" value="SEC-INDEPENDENT PROTEIN TRANSLOCASE PROTEIN TATA"/>
    <property type="match status" value="1"/>
</dbReference>
<dbReference type="Pfam" id="PF02416">
    <property type="entry name" value="TatA_B_E"/>
    <property type="match status" value="1"/>
</dbReference>
<organism>
    <name type="scientific">Shouchella clausii (strain KSM-K16)</name>
    <name type="common">Alkalihalobacillus clausii</name>
    <dbReference type="NCBI Taxonomy" id="66692"/>
    <lineage>
        <taxon>Bacteria</taxon>
        <taxon>Bacillati</taxon>
        <taxon>Bacillota</taxon>
        <taxon>Bacilli</taxon>
        <taxon>Bacillales</taxon>
        <taxon>Bacillaceae</taxon>
        <taxon>Shouchella</taxon>
    </lineage>
</organism>
<evidence type="ECO:0000255" key="1">
    <source>
        <dbReference type="HAMAP-Rule" id="MF_00236"/>
    </source>
</evidence>
<accession>Q5WJP2</accession>
<name>TATA_SHOC1</name>
<gene>
    <name evidence="1" type="primary">tatA</name>
    <name type="ordered locus">ABC0874</name>
</gene>
<reference key="1">
    <citation type="submission" date="2003-10" db="EMBL/GenBank/DDBJ databases">
        <title>The complete genome sequence of the alkaliphilic Bacillus clausii KSM-K16.</title>
        <authorList>
            <person name="Takaki Y."/>
            <person name="Kageyama Y."/>
            <person name="Shimamura S."/>
            <person name="Suzuki H."/>
            <person name="Nishi S."/>
            <person name="Hatada Y."/>
            <person name="Kawai S."/>
            <person name="Ito S."/>
            <person name="Horikoshi K."/>
        </authorList>
    </citation>
    <scope>NUCLEOTIDE SEQUENCE [LARGE SCALE GENOMIC DNA]</scope>
    <source>
        <strain>KSM-K16</strain>
    </source>
</reference>
<keyword id="KW-1003">Cell membrane</keyword>
<keyword id="KW-0472">Membrane</keyword>
<keyword id="KW-0653">Protein transport</keyword>
<keyword id="KW-1185">Reference proteome</keyword>
<keyword id="KW-0811">Translocation</keyword>
<keyword id="KW-0812">Transmembrane</keyword>
<keyword id="KW-1133">Transmembrane helix</keyword>
<keyword id="KW-0813">Transport</keyword>
<comment type="function">
    <text evidence="1">Part of the twin-arginine translocation (Tat) system that transports large folded proteins containing a characteristic twin-arginine motif in their signal peptide across membranes. TatA could form the protein-conducting channel of the Tat system.</text>
</comment>
<comment type="subunit">
    <text evidence="1">Forms a complex with TatC.</text>
</comment>
<comment type="subcellular location">
    <subcellularLocation>
        <location evidence="1">Cell membrane</location>
        <topology evidence="1">Single-pass membrane protein</topology>
    </subcellularLocation>
</comment>
<comment type="similarity">
    <text evidence="1">Belongs to the TatA/E family.</text>
</comment>
<feature type="chain" id="PRO_1000078296" description="Sec-independent protein translocase protein TatA">
    <location>
        <begin position="1"/>
        <end position="63"/>
    </location>
</feature>
<feature type="transmembrane region" description="Helical" evidence="1">
    <location>
        <begin position="1"/>
        <end position="21"/>
    </location>
</feature>
<protein>
    <recommendedName>
        <fullName evidence="1">Sec-independent protein translocase protein TatA</fullName>
    </recommendedName>
</protein>
<sequence>MGGLSVGSVVLIALVALLIFGPKKLPELGKAAGSTLREFKNATKGLADDDDDTKSTNVQKEKA</sequence>
<proteinExistence type="inferred from homology"/>